<comment type="function">
    <text evidence="1">Shows a 3'-5' exoribonuclease activity.</text>
</comment>
<comment type="similarity">
    <text evidence="1">Belongs to the YhaM family.</text>
</comment>
<reference key="1">
    <citation type="submission" date="2008-10" db="EMBL/GenBank/DDBJ databases">
        <title>Genome sequence of Bacillus cereus B4264.</title>
        <authorList>
            <person name="Dodson R.J."/>
            <person name="Durkin A.S."/>
            <person name="Rosovitz M.J."/>
            <person name="Rasko D.A."/>
            <person name="Hoffmaster A."/>
            <person name="Ravel J."/>
            <person name="Sutton G."/>
        </authorList>
    </citation>
    <scope>NUCLEOTIDE SEQUENCE [LARGE SCALE GENOMIC DNA]</scope>
    <source>
        <strain>B4264</strain>
    </source>
</reference>
<keyword id="KW-0269">Exonuclease</keyword>
<keyword id="KW-0378">Hydrolase</keyword>
<keyword id="KW-0540">Nuclease</keyword>
<gene>
    <name evidence="1" type="primary">yhaM</name>
    <name type="ordered locus">BCB4264_A1052</name>
</gene>
<sequence length="314" mass="35514">MKKKIAEYEVGEQVDIFLLIKTATKGIASNGKPFLTVILQDPSGDIEAKLWDVSPEVEKQYVAETIVKVAGDILNYKGRIQLRVKQIRVANENEVTDISDFVEKAPVKKEDMVEKITQYIFEMRNPNIQRLTRHLLNKHQNEFLDYPAATKNHHEFVSGLAYHVVSMLDLAKAISNLYPSLDKDLLYAGVILHDLGKVIELSGPISTTYTLEGNLLGHISIMVNEIGKAADELQIDAEEVLILQHIVLSHHGKAEWGSPKPPLVKEAEILHYIDNLDAKMNMMDRALGRTKPGEYTERVFALDNRSFYKPSFHN</sequence>
<name>YHAM_BACC4</name>
<proteinExistence type="inferred from homology"/>
<protein>
    <recommendedName>
        <fullName evidence="1">3'-5' exoribonuclease YhaM</fullName>
        <ecNumber evidence="1">3.1.-.-</ecNumber>
    </recommendedName>
</protein>
<evidence type="ECO:0000255" key="1">
    <source>
        <dbReference type="HAMAP-Rule" id="MF_01427"/>
    </source>
</evidence>
<evidence type="ECO:0000255" key="2">
    <source>
        <dbReference type="PROSITE-ProRule" id="PRU01175"/>
    </source>
</evidence>
<accession>B7HFZ0</accession>
<organism>
    <name type="scientific">Bacillus cereus (strain B4264)</name>
    <dbReference type="NCBI Taxonomy" id="405532"/>
    <lineage>
        <taxon>Bacteria</taxon>
        <taxon>Bacillati</taxon>
        <taxon>Bacillota</taxon>
        <taxon>Bacilli</taxon>
        <taxon>Bacillales</taxon>
        <taxon>Bacillaceae</taxon>
        <taxon>Bacillus</taxon>
        <taxon>Bacillus cereus group</taxon>
    </lineage>
</organism>
<feature type="chain" id="PRO_1000145736" description="3'-5' exoribonuclease YhaM">
    <location>
        <begin position="1"/>
        <end position="314"/>
    </location>
</feature>
<feature type="domain" description="HD" evidence="2">
    <location>
        <begin position="163"/>
        <end position="279"/>
    </location>
</feature>
<dbReference type="EC" id="3.1.-.-" evidence="1"/>
<dbReference type="EMBL" id="CP001176">
    <property type="protein sequence ID" value="ACK62580.1"/>
    <property type="molecule type" value="Genomic_DNA"/>
</dbReference>
<dbReference type="RefSeq" id="WP_000726638.1">
    <property type="nucleotide sequence ID" value="NZ_VEHB01000015.1"/>
</dbReference>
<dbReference type="SMR" id="B7HFZ0"/>
<dbReference type="GeneID" id="69533483"/>
<dbReference type="KEGG" id="bcb:BCB4264_A1052"/>
<dbReference type="HOGENOM" id="CLU_056349_2_0_9"/>
<dbReference type="Proteomes" id="UP000007096">
    <property type="component" value="Chromosome"/>
</dbReference>
<dbReference type="GO" id="GO:0000175">
    <property type="term" value="F:3'-5'-RNA exonuclease activity"/>
    <property type="evidence" value="ECO:0007669"/>
    <property type="project" value="UniProtKB-UniRule"/>
</dbReference>
<dbReference type="GO" id="GO:0003676">
    <property type="term" value="F:nucleic acid binding"/>
    <property type="evidence" value="ECO:0007669"/>
    <property type="project" value="InterPro"/>
</dbReference>
<dbReference type="GO" id="GO:0031125">
    <property type="term" value="P:rRNA 3'-end processing"/>
    <property type="evidence" value="ECO:0007669"/>
    <property type="project" value="TreeGrafter"/>
</dbReference>
<dbReference type="CDD" id="cd00077">
    <property type="entry name" value="HDc"/>
    <property type="match status" value="1"/>
</dbReference>
<dbReference type="CDD" id="cd04492">
    <property type="entry name" value="YhaM_OBF_like"/>
    <property type="match status" value="1"/>
</dbReference>
<dbReference type="FunFam" id="1.10.3210.10:FF:000008">
    <property type="entry name" value="3'-5' exoribonuclease YhaM"/>
    <property type="match status" value="1"/>
</dbReference>
<dbReference type="Gene3D" id="1.10.3210.10">
    <property type="entry name" value="Hypothetical protein af1432"/>
    <property type="match status" value="1"/>
</dbReference>
<dbReference type="Gene3D" id="2.40.50.140">
    <property type="entry name" value="Nucleic acid-binding proteins"/>
    <property type="match status" value="1"/>
</dbReference>
<dbReference type="HAMAP" id="MF_01427">
    <property type="entry name" value="3_5_Exoribonuc_YhaM"/>
    <property type="match status" value="1"/>
</dbReference>
<dbReference type="InterPro" id="IPR020873">
    <property type="entry name" value="3'-5'_exoribonuclease_YhaM"/>
</dbReference>
<dbReference type="InterPro" id="IPR003607">
    <property type="entry name" value="HD/PDEase_dom"/>
</dbReference>
<dbReference type="InterPro" id="IPR006674">
    <property type="entry name" value="HD_domain"/>
</dbReference>
<dbReference type="InterPro" id="IPR012340">
    <property type="entry name" value="NA-bd_OB-fold"/>
</dbReference>
<dbReference type="InterPro" id="IPR004365">
    <property type="entry name" value="NA-bd_OB_tRNA"/>
</dbReference>
<dbReference type="InterPro" id="IPR050798">
    <property type="entry name" value="YhaM_exoribonuc/phosphodiest"/>
</dbReference>
<dbReference type="NCBIfam" id="NF010007">
    <property type="entry name" value="PRK13480.1"/>
    <property type="match status" value="1"/>
</dbReference>
<dbReference type="PANTHER" id="PTHR37294">
    <property type="entry name" value="3'-5' EXORIBONUCLEASE YHAM"/>
    <property type="match status" value="1"/>
</dbReference>
<dbReference type="PANTHER" id="PTHR37294:SF1">
    <property type="entry name" value="3'-5' EXORIBONUCLEASE YHAM"/>
    <property type="match status" value="1"/>
</dbReference>
<dbReference type="Pfam" id="PF01966">
    <property type="entry name" value="HD"/>
    <property type="match status" value="1"/>
</dbReference>
<dbReference type="Pfam" id="PF01336">
    <property type="entry name" value="tRNA_anti-codon"/>
    <property type="match status" value="1"/>
</dbReference>
<dbReference type="SMART" id="SM00471">
    <property type="entry name" value="HDc"/>
    <property type="match status" value="1"/>
</dbReference>
<dbReference type="SUPFAM" id="SSF109604">
    <property type="entry name" value="HD-domain/PDEase-like"/>
    <property type="match status" value="1"/>
</dbReference>
<dbReference type="SUPFAM" id="SSF50249">
    <property type="entry name" value="Nucleic acid-binding proteins"/>
    <property type="match status" value="1"/>
</dbReference>
<dbReference type="PROSITE" id="PS51831">
    <property type="entry name" value="HD"/>
    <property type="match status" value="1"/>
</dbReference>